<evidence type="ECO:0000250" key="1">
    <source>
        <dbReference type="UniProtKB" id="P28088"/>
    </source>
</evidence>
<evidence type="ECO:0000255" key="2"/>
<evidence type="ECO:0000255" key="3">
    <source>
        <dbReference type="PROSITE-ProRule" id="PRU00521"/>
    </source>
</evidence>
<evidence type="ECO:0000256" key="4">
    <source>
        <dbReference type="SAM" id="MobiDB-lite"/>
    </source>
</evidence>
<evidence type="ECO:0000269" key="5">
    <source>
    </source>
</evidence>
<evidence type="ECO:0000269" key="6">
    <source>
    </source>
</evidence>
<evidence type="ECO:0000269" key="7">
    <source>
    </source>
</evidence>
<evidence type="ECO:0000269" key="8">
    <source>
    </source>
</evidence>
<evidence type="ECO:0000269" key="9">
    <source>
    </source>
</evidence>
<evidence type="ECO:0000303" key="10">
    <source>
    </source>
</evidence>
<evidence type="ECO:0000303" key="11">
    <source>
    </source>
</evidence>
<evidence type="ECO:0000303" key="12">
    <source>
    </source>
</evidence>
<evidence type="ECO:0000305" key="13"/>
<evidence type="ECO:0000312" key="14">
    <source>
        <dbReference type="HGNC" id="HGNC:3179"/>
    </source>
</evidence>
<evidence type="ECO:0007829" key="15">
    <source>
        <dbReference type="PDB" id="8HCQ"/>
    </source>
</evidence>
<evidence type="ECO:0007829" key="16">
    <source>
        <dbReference type="PDB" id="8XVI"/>
    </source>
</evidence>
<keyword id="KW-0002">3D-structure</keyword>
<keyword id="KW-0025">Alternative splicing</keyword>
<keyword id="KW-1003">Cell membrane</keyword>
<keyword id="KW-0225">Disease variant</keyword>
<keyword id="KW-1015">Disulfide bond</keyword>
<keyword id="KW-0297">G-protein coupled receptor</keyword>
<keyword id="KW-0325">Glycoprotein</keyword>
<keyword id="KW-1063">Hypotrichosis</keyword>
<keyword id="KW-0472">Membrane</keyword>
<keyword id="KW-0597">Phosphoprotein</keyword>
<keyword id="KW-1267">Proteomics identification</keyword>
<keyword id="KW-0675">Receptor</keyword>
<keyword id="KW-1185">Reference proteome</keyword>
<keyword id="KW-0732">Signal</keyword>
<keyword id="KW-0807">Transducer</keyword>
<keyword id="KW-0812">Transmembrane</keyword>
<keyword id="KW-1133">Transmembrane helix</keyword>
<proteinExistence type="evidence at protein level"/>
<reference key="1">
    <citation type="journal article" date="1991" name="Biochem. Biophys. Res. Commun.">
        <title>Cloning and characterization of cDNA encoding human A-type endothelin receptor.</title>
        <authorList>
            <person name="Adachi M."/>
            <person name="Yang Y.Y."/>
            <person name="Furuichi Y."/>
            <person name="Miyamoto C."/>
        </authorList>
    </citation>
    <scope>NUCLEOTIDE SEQUENCE [MRNA] (ISOFORM 1)</scope>
    <source>
        <tissue>Placenta</tissue>
    </source>
</reference>
<reference key="2">
    <citation type="journal article" date="1991" name="Biochem. Biophys. Res. Commun.">
        <title>Cloning and chromosomal localization of a human endothelin ETA receptor.</title>
        <authorList>
            <person name="Cyr C."/>
            <person name="Huebner K."/>
            <person name="Druck T."/>
            <person name="Kris R."/>
        </authorList>
    </citation>
    <scope>NUCLEOTIDE SEQUENCE [MRNA] (ISOFORM 1)</scope>
    <source>
        <tissue>Placenta</tissue>
    </source>
</reference>
<reference key="3">
    <citation type="journal article" date="1991" name="FEBS Lett.">
        <title>Cloning and expression of human endothelin-1 receptor cDNA.</title>
        <authorList>
            <person name="Hosoda K."/>
            <person name="Nakao K."/>
            <person name="Arai H."/>
            <person name="Suga S."/>
            <person name="Ogawa Y."/>
            <person name="Mukoyama M."/>
            <person name="Shirakami G."/>
            <person name="Saito Y."/>
            <person name="Nakanishi S."/>
            <person name="Imura H."/>
        </authorList>
    </citation>
    <scope>NUCLEOTIDE SEQUENCE [MRNA] (ISOFORM 1)</scope>
</reference>
<reference key="4">
    <citation type="journal article" date="1992" name="Jpn. Circ. J.">
        <title>Molecular cloning of human endothelin receptors and their expression in vascular endothelial cells and smooth muscle cells.</title>
        <authorList>
            <person name="Arai H."/>
            <person name="Nakao K."/>
            <person name="Hosoda K."/>
            <person name="Ogawa Y."/>
            <person name="Nakagawa O."/>
            <person name="Komatsu Y."/>
            <person name="Imura H."/>
        </authorList>
    </citation>
    <scope>NUCLEOTIDE SEQUENCE [MRNA] (ISOFORM 1)</scope>
</reference>
<reference key="5">
    <citation type="journal article" date="1993" name="J. Biol. Chem.">
        <title>Molecular characterization and regulation of the human endothelin receptors.</title>
        <authorList>
            <person name="Elshourbagy N.A."/>
            <person name="Korman D.R."/>
            <person name="Wu H.L."/>
            <person name="Sylvester D.R."/>
            <person name="Lee J.A."/>
            <person name="Nuthalaganti P."/>
            <person name="Bergsma D.J."/>
            <person name="Kumar C.S."/>
            <person name="Nambi P."/>
        </authorList>
    </citation>
    <scope>NUCLEOTIDE SEQUENCE [MRNA] (ISOFORM 1)</scope>
</reference>
<reference key="6">
    <citation type="journal article" date="1992" name="J. Biol. Chem.">
        <title>Organization, structure, chromosomal assignment, and expression of the gene encoding the human endothelin-A receptor.</title>
        <authorList>
            <person name="Hosoda K."/>
            <person name="Nakao K."/>
            <person name="Tamura N."/>
            <person name="Arai H."/>
            <person name="Ogawa Y."/>
            <person name="Suga S."/>
            <person name="Nakanishi S."/>
            <person name="Imura H."/>
        </authorList>
    </citation>
    <scope>NUCLEOTIDE SEQUENCE [GENOMIC DNA] (ISOFORM 1)</scope>
</reference>
<reference key="7">
    <citation type="journal article" date="1992" name="Am. J. Med. Sci.">
        <title>Cloning and expression of a human endothelin receptor: subtype A.</title>
        <authorList>
            <person name="Hayzer D.J."/>
            <person name="Rose P.M."/>
            <person name="Lynch J.S."/>
            <person name="Webb M.L."/>
            <person name="Kienzle B.K."/>
            <person name="Liu E.C."/>
            <person name="Bogosian E.A."/>
            <person name="Brinson E."/>
            <person name="Runge M.S."/>
        </authorList>
    </citation>
    <scope>NUCLEOTIDE SEQUENCE [GENOMIC DNA] (ISOFORM 1)</scope>
    <source>
        <tissue>Placenta</tissue>
    </source>
</reference>
<reference key="8">
    <citation type="journal article" date="1996" name="Biochem. J.">
        <title>Alternative RNA splicing of the human endothelin-A receptor generates multiple transcripts.</title>
        <authorList>
            <person name="Miyamoto Y."/>
            <person name="Yoshimasa T."/>
            <person name="Arai H."/>
            <person name="Takaya K."/>
            <person name="Ogawa Y."/>
            <person name="Itoh H."/>
            <person name="Nakao K."/>
        </authorList>
    </citation>
    <scope>NUCLEOTIDE SEQUENCE [MRNA] (ISOFORMS 1; 3 AND 4)</scope>
    <scope>TISSUE SPECIFICITY</scope>
    <source>
        <tissue>Lung</tissue>
    </source>
</reference>
<reference key="9">
    <citation type="submission" date="2003-04" db="EMBL/GenBank/DDBJ databases">
        <title>cDNA clones of human proteins involved in signal transduction sequenced by the Guthrie cDNA resource center (www.cdna.org).</title>
        <authorList>
            <person name="Warren C.N."/>
            <person name="Aronstam R.S."/>
            <person name="Sharma S.V."/>
        </authorList>
    </citation>
    <scope>NUCLEOTIDE SEQUENCE [LARGE SCALE MRNA] (ISOFORM 1)</scope>
    <source>
        <tissue>Placenta</tissue>
    </source>
</reference>
<reference key="10">
    <citation type="submission" date="2003-09" db="EMBL/GenBank/DDBJ databases">
        <authorList>
            <consortium name="NIEHS SNPs program"/>
        </authorList>
    </citation>
    <scope>NUCLEOTIDE SEQUENCE [GENOMIC DNA]</scope>
</reference>
<reference key="11">
    <citation type="journal article" date="2004" name="Nat. Genet.">
        <title>Complete sequencing and characterization of 21,243 full-length human cDNAs.</title>
        <authorList>
            <person name="Ota T."/>
            <person name="Suzuki Y."/>
            <person name="Nishikawa T."/>
            <person name="Otsuki T."/>
            <person name="Sugiyama T."/>
            <person name="Irie R."/>
            <person name="Wakamatsu A."/>
            <person name="Hayashi K."/>
            <person name="Sato H."/>
            <person name="Nagai K."/>
            <person name="Kimura K."/>
            <person name="Makita H."/>
            <person name="Sekine M."/>
            <person name="Obayashi M."/>
            <person name="Nishi T."/>
            <person name="Shibahara T."/>
            <person name="Tanaka T."/>
            <person name="Ishii S."/>
            <person name="Yamamoto J."/>
            <person name="Saito K."/>
            <person name="Kawai Y."/>
            <person name="Isono Y."/>
            <person name="Nakamura Y."/>
            <person name="Nagahari K."/>
            <person name="Murakami K."/>
            <person name="Yasuda T."/>
            <person name="Iwayanagi T."/>
            <person name="Wagatsuma M."/>
            <person name="Shiratori A."/>
            <person name="Sudo H."/>
            <person name="Hosoiri T."/>
            <person name="Kaku Y."/>
            <person name="Kodaira H."/>
            <person name="Kondo H."/>
            <person name="Sugawara M."/>
            <person name="Takahashi M."/>
            <person name="Kanda K."/>
            <person name="Yokoi T."/>
            <person name="Furuya T."/>
            <person name="Kikkawa E."/>
            <person name="Omura Y."/>
            <person name="Abe K."/>
            <person name="Kamihara K."/>
            <person name="Katsuta N."/>
            <person name="Sato K."/>
            <person name="Tanikawa M."/>
            <person name="Yamazaki M."/>
            <person name="Ninomiya K."/>
            <person name="Ishibashi T."/>
            <person name="Yamashita H."/>
            <person name="Murakawa K."/>
            <person name="Fujimori K."/>
            <person name="Tanai H."/>
            <person name="Kimata M."/>
            <person name="Watanabe M."/>
            <person name="Hiraoka S."/>
            <person name="Chiba Y."/>
            <person name="Ishida S."/>
            <person name="Ono Y."/>
            <person name="Takiguchi S."/>
            <person name="Watanabe S."/>
            <person name="Yosida M."/>
            <person name="Hotuta T."/>
            <person name="Kusano J."/>
            <person name="Kanehori K."/>
            <person name="Takahashi-Fujii A."/>
            <person name="Hara H."/>
            <person name="Tanase T.-O."/>
            <person name="Nomura Y."/>
            <person name="Togiya S."/>
            <person name="Komai F."/>
            <person name="Hara R."/>
            <person name="Takeuchi K."/>
            <person name="Arita M."/>
            <person name="Imose N."/>
            <person name="Musashino K."/>
            <person name="Yuuki H."/>
            <person name="Oshima A."/>
            <person name="Sasaki N."/>
            <person name="Aotsuka S."/>
            <person name="Yoshikawa Y."/>
            <person name="Matsunawa H."/>
            <person name="Ichihara T."/>
            <person name="Shiohata N."/>
            <person name="Sano S."/>
            <person name="Moriya S."/>
            <person name="Momiyama H."/>
            <person name="Satoh N."/>
            <person name="Takami S."/>
            <person name="Terashima Y."/>
            <person name="Suzuki O."/>
            <person name="Nakagawa S."/>
            <person name="Senoh A."/>
            <person name="Mizoguchi H."/>
            <person name="Goto Y."/>
            <person name="Shimizu F."/>
            <person name="Wakebe H."/>
            <person name="Hishigaki H."/>
            <person name="Watanabe T."/>
            <person name="Sugiyama A."/>
            <person name="Takemoto M."/>
            <person name="Kawakami B."/>
            <person name="Yamazaki M."/>
            <person name="Watanabe K."/>
            <person name="Kumagai A."/>
            <person name="Itakura S."/>
            <person name="Fukuzumi Y."/>
            <person name="Fujimori Y."/>
            <person name="Komiyama M."/>
            <person name="Tashiro H."/>
            <person name="Tanigami A."/>
            <person name="Fujiwara T."/>
            <person name="Ono T."/>
            <person name="Yamada K."/>
            <person name="Fujii Y."/>
            <person name="Ozaki K."/>
            <person name="Hirao M."/>
            <person name="Ohmori Y."/>
            <person name="Kawabata A."/>
            <person name="Hikiji T."/>
            <person name="Kobatake N."/>
            <person name="Inagaki H."/>
            <person name="Ikema Y."/>
            <person name="Okamoto S."/>
            <person name="Okitani R."/>
            <person name="Kawakami T."/>
            <person name="Noguchi S."/>
            <person name="Itoh T."/>
            <person name="Shigeta K."/>
            <person name="Senba T."/>
            <person name="Matsumura K."/>
            <person name="Nakajima Y."/>
            <person name="Mizuno T."/>
            <person name="Morinaga M."/>
            <person name="Sasaki M."/>
            <person name="Togashi T."/>
            <person name="Oyama M."/>
            <person name="Hata H."/>
            <person name="Watanabe M."/>
            <person name="Komatsu T."/>
            <person name="Mizushima-Sugano J."/>
            <person name="Satoh T."/>
            <person name="Shirai Y."/>
            <person name="Takahashi Y."/>
            <person name="Nakagawa K."/>
            <person name="Okumura K."/>
            <person name="Nagase T."/>
            <person name="Nomura N."/>
            <person name="Kikuchi H."/>
            <person name="Masuho Y."/>
            <person name="Yamashita R."/>
            <person name="Nakai K."/>
            <person name="Yada T."/>
            <person name="Nakamura Y."/>
            <person name="Ohara O."/>
            <person name="Isogai T."/>
            <person name="Sugano S."/>
        </authorList>
    </citation>
    <scope>NUCLEOTIDE SEQUENCE [LARGE SCALE MRNA] (ISOFORMS 1 AND 5)</scope>
    <source>
        <tissue>Cerebellum</tissue>
        <tissue>Testis</tissue>
        <tissue>Trachea</tissue>
    </source>
</reference>
<reference key="12">
    <citation type="journal article" date="2005" name="Nature">
        <title>Generation and annotation of the DNA sequences of human chromosomes 2 and 4.</title>
        <authorList>
            <person name="Hillier L.W."/>
            <person name="Graves T.A."/>
            <person name="Fulton R.S."/>
            <person name="Fulton L.A."/>
            <person name="Pepin K.H."/>
            <person name="Minx P."/>
            <person name="Wagner-McPherson C."/>
            <person name="Layman D."/>
            <person name="Wylie K."/>
            <person name="Sekhon M."/>
            <person name="Becker M.C."/>
            <person name="Fewell G.A."/>
            <person name="Delehaunty K.D."/>
            <person name="Miner T.L."/>
            <person name="Nash W.E."/>
            <person name="Kremitzki C."/>
            <person name="Oddy L."/>
            <person name="Du H."/>
            <person name="Sun H."/>
            <person name="Bradshaw-Cordum H."/>
            <person name="Ali J."/>
            <person name="Carter J."/>
            <person name="Cordes M."/>
            <person name="Harris A."/>
            <person name="Isak A."/>
            <person name="van Brunt A."/>
            <person name="Nguyen C."/>
            <person name="Du F."/>
            <person name="Courtney L."/>
            <person name="Kalicki J."/>
            <person name="Ozersky P."/>
            <person name="Abbott S."/>
            <person name="Armstrong J."/>
            <person name="Belter E.A."/>
            <person name="Caruso L."/>
            <person name="Cedroni M."/>
            <person name="Cotton M."/>
            <person name="Davidson T."/>
            <person name="Desai A."/>
            <person name="Elliott G."/>
            <person name="Erb T."/>
            <person name="Fronick C."/>
            <person name="Gaige T."/>
            <person name="Haakenson W."/>
            <person name="Haglund K."/>
            <person name="Holmes A."/>
            <person name="Harkins R."/>
            <person name="Kim K."/>
            <person name="Kruchowski S.S."/>
            <person name="Strong C.M."/>
            <person name="Grewal N."/>
            <person name="Goyea E."/>
            <person name="Hou S."/>
            <person name="Levy A."/>
            <person name="Martinka S."/>
            <person name="Mead K."/>
            <person name="McLellan M.D."/>
            <person name="Meyer R."/>
            <person name="Randall-Maher J."/>
            <person name="Tomlinson C."/>
            <person name="Dauphin-Kohlberg S."/>
            <person name="Kozlowicz-Reilly A."/>
            <person name="Shah N."/>
            <person name="Swearengen-Shahid S."/>
            <person name="Snider J."/>
            <person name="Strong J.T."/>
            <person name="Thompson J."/>
            <person name="Yoakum M."/>
            <person name="Leonard S."/>
            <person name="Pearman C."/>
            <person name="Trani L."/>
            <person name="Radionenko M."/>
            <person name="Waligorski J.E."/>
            <person name="Wang C."/>
            <person name="Rock S.M."/>
            <person name="Tin-Wollam A.-M."/>
            <person name="Maupin R."/>
            <person name="Latreille P."/>
            <person name="Wendl M.C."/>
            <person name="Yang S.-P."/>
            <person name="Pohl C."/>
            <person name="Wallis J.W."/>
            <person name="Spieth J."/>
            <person name="Bieri T.A."/>
            <person name="Berkowicz N."/>
            <person name="Nelson J.O."/>
            <person name="Osborne J."/>
            <person name="Ding L."/>
            <person name="Meyer R."/>
            <person name="Sabo A."/>
            <person name="Shotland Y."/>
            <person name="Sinha P."/>
            <person name="Wohldmann P.E."/>
            <person name="Cook L.L."/>
            <person name="Hickenbotham M.T."/>
            <person name="Eldred J."/>
            <person name="Williams D."/>
            <person name="Jones T.A."/>
            <person name="She X."/>
            <person name="Ciccarelli F.D."/>
            <person name="Izaurralde E."/>
            <person name="Taylor J."/>
            <person name="Schmutz J."/>
            <person name="Myers R.M."/>
            <person name="Cox D.R."/>
            <person name="Huang X."/>
            <person name="McPherson J.D."/>
            <person name="Mardis E.R."/>
            <person name="Clifton S.W."/>
            <person name="Warren W.C."/>
            <person name="Chinwalla A.T."/>
            <person name="Eddy S.R."/>
            <person name="Marra M.A."/>
            <person name="Ovcharenko I."/>
            <person name="Furey T.S."/>
            <person name="Miller W."/>
            <person name="Eichler E.E."/>
            <person name="Bork P."/>
            <person name="Suyama M."/>
            <person name="Torrents D."/>
            <person name="Waterston R.H."/>
            <person name="Wilson R.K."/>
        </authorList>
    </citation>
    <scope>NUCLEOTIDE SEQUENCE [LARGE SCALE GENOMIC DNA]</scope>
</reference>
<reference key="13">
    <citation type="submission" date="2005-09" db="EMBL/GenBank/DDBJ databases">
        <authorList>
            <person name="Mural R.J."/>
            <person name="Istrail S."/>
            <person name="Sutton G.G."/>
            <person name="Florea L."/>
            <person name="Halpern A.L."/>
            <person name="Mobarry C.M."/>
            <person name="Lippert R."/>
            <person name="Walenz B."/>
            <person name="Shatkay H."/>
            <person name="Dew I."/>
            <person name="Miller J.R."/>
            <person name="Flanigan M.J."/>
            <person name="Edwards N.J."/>
            <person name="Bolanos R."/>
            <person name="Fasulo D."/>
            <person name="Halldorsson B.V."/>
            <person name="Hannenhalli S."/>
            <person name="Turner R."/>
            <person name="Yooseph S."/>
            <person name="Lu F."/>
            <person name="Nusskern D.R."/>
            <person name="Shue B.C."/>
            <person name="Zheng X.H."/>
            <person name="Zhong F."/>
            <person name="Delcher A.L."/>
            <person name="Huson D.H."/>
            <person name="Kravitz S.A."/>
            <person name="Mouchard L."/>
            <person name="Reinert K."/>
            <person name="Remington K.A."/>
            <person name="Clark A.G."/>
            <person name="Waterman M.S."/>
            <person name="Eichler E.E."/>
            <person name="Adams M.D."/>
            <person name="Hunkapiller M.W."/>
            <person name="Myers E.W."/>
            <person name="Venter J.C."/>
        </authorList>
    </citation>
    <scope>NUCLEOTIDE SEQUENCE [LARGE SCALE GENOMIC DNA]</scope>
</reference>
<reference key="14">
    <citation type="journal article" date="2004" name="Genome Res.">
        <title>The status, quality, and expansion of the NIH full-length cDNA project: the Mammalian Gene Collection (MGC).</title>
        <authorList>
            <consortium name="The MGC Project Team"/>
        </authorList>
    </citation>
    <scope>NUCLEOTIDE SEQUENCE [LARGE SCALE MRNA] (ISOFORM 1)</scope>
    <source>
        <tissue>Brain</tissue>
    </source>
</reference>
<reference key="15">
    <citation type="journal article" date="1993" name="Biochem. Biophys. Res. Commun.">
        <title>Molecular characterization of the 5'-flanking region of human genomic ETA gene.</title>
        <authorList>
            <person name="Yang H."/>
            <person name="Tabuchi H."/>
            <person name="Furuichi Y."/>
            <person name="Miyamoto C."/>
        </authorList>
    </citation>
    <scope>NUCLEOTIDE SEQUENCE [GENOMIC DNA] OF 1-140 (ISOFORMS 1/2/3/4)</scope>
</reference>
<reference key="16">
    <citation type="journal article" date="1997" name="J. Clin. Endocrinol. Metab.">
        <title>Endothelin-1 and ETA receptor expression in vascular smooth muscle cells from human placenta: a new ETA receptor messenger ribonucleic acid is generated by alternative splicing of exon 3.</title>
        <authorList>
            <person name="Bourgeois C."/>
            <person name="Robert B."/>
            <person name="Rebourcet R."/>
            <person name="Mondon F."/>
            <person name="Mignot T.-M."/>
            <person name="Duc-Goiran P."/>
            <person name="Ferre F."/>
        </authorList>
    </citation>
    <scope>NUCLEOTIDE SEQUENCE [MRNA] OF 52-427 (ISOFORM 2)</scope>
    <scope>TISSUE SPECIFICITY</scope>
    <source>
        <tissue>Placenta</tissue>
    </source>
</reference>
<reference key="17">
    <citation type="journal article" date="2001" name="J. Biol. Chem.">
        <title>Tip60 and HDAC7 interact with the endothelin receptor a and may be involved in downstream signaling.</title>
        <authorList>
            <person name="Lee H.-J."/>
            <person name="Chun M."/>
            <person name="Kandror K.V."/>
        </authorList>
    </citation>
    <scope>INTERACTION WITH HDAC7 AND KAT5</scope>
</reference>
<reference key="18">
    <citation type="journal article" date="2015" name="Am. J. Hum. Genet.">
        <title>Mutations in the endothelin receptor type A cause mandibulofacial dysostosis with alopecia.</title>
        <authorList>
            <person name="Gordon C.T."/>
            <person name="Weaver K.N."/>
            <person name="Zechi-Ceide R.M."/>
            <person name="Madsen E.C."/>
            <person name="Tavares A.L."/>
            <person name="Oufadem M."/>
            <person name="Kurihara Y."/>
            <person name="Adameyko I."/>
            <person name="Picard A."/>
            <person name="Breton S."/>
            <person name="Pierrot S."/>
            <person name="Biosse-Duplan M."/>
            <person name="Voisin N."/>
            <person name="Masson C."/>
            <person name="Bole-Feysot C."/>
            <person name="Nitschke P."/>
            <person name="Delrue M.A."/>
            <person name="Lacombe D."/>
            <person name="Guion-Almeida M.L."/>
            <person name="Moura P.P."/>
            <person name="Garib D.G."/>
            <person name="Munnich A."/>
            <person name="Ernfors P."/>
            <person name="Hufnagel R.B."/>
            <person name="Hopkin R.J."/>
            <person name="Kurihara H."/>
            <person name="Saal H.M."/>
            <person name="Weaver D.D."/>
            <person name="Katsanis N."/>
            <person name="Lyonnet S."/>
            <person name="Golzio C."/>
            <person name="Clouthier D.E."/>
            <person name="Amiel J."/>
        </authorList>
    </citation>
    <scope>INVOLVEMENT IN MFDA</scope>
    <scope>VARIANTS MFDA PHE-129 AND LYS-303</scope>
</reference>
<reference key="19">
    <citation type="journal article" date="2006" name="Science">
        <title>The consensus coding sequences of human breast and colorectal cancers.</title>
        <authorList>
            <person name="Sjoeblom T."/>
            <person name="Jones S."/>
            <person name="Wood L.D."/>
            <person name="Parsons D.W."/>
            <person name="Lin J."/>
            <person name="Barber T.D."/>
            <person name="Mandelker D."/>
            <person name="Leary R.J."/>
            <person name="Ptak J."/>
            <person name="Silliman N."/>
            <person name="Szabo S."/>
            <person name="Buckhaults P."/>
            <person name="Farrell C."/>
            <person name="Meeh P."/>
            <person name="Markowitz S.D."/>
            <person name="Willis J."/>
            <person name="Dawson D."/>
            <person name="Willson J.K.V."/>
            <person name="Gazdar A.F."/>
            <person name="Hartigan J."/>
            <person name="Wu L."/>
            <person name="Liu C."/>
            <person name="Parmigiani G."/>
            <person name="Park B.H."/>
            <person name="Bachman K.E."/>
            <person name="Papadopoulos N."/>
            <person name="Vogelstein B."/>
            <person name="Kinzler K.W."/>
            <person name="Velculescu V.E."/>
        </authorList>
    </citation>
    <scope>VARIANT [LARGE SCALE ANALYSIS] LEU-136</scope>
</reference>
<feature type="signal peptide" evidence="2">
    <location>
        <begin position="1"/>
        <end position="20"/>
    </location>
</feature>
<feature type="chain" id="PRO_0000012721" description="Endothelin-1 receptor">
    <location>
        <begin position="21"/>
        <end position="427"/>
    </location>
</feature>
<feature type="topological domain" description="Extracellular" evidence="2">
    <location>
        <begin position="21"/>
        <end position="80"/>
    </location>
</feature>
<feature type="transmembrane region" description="Helical; Name=1" evidence="2">
    <location>
        <begin position="81"/>
        <end position="102"/>
    </location>
</feature>
<feature type="topological domain" description="Cytoplasmic" evidence="2">
    <location>
        <begin position="103"/>
        <end position="112"/>
    </location>
</feature>
<feature type="transmembrane region" description="Helical; Name=2" evidence="2">
    <location>
        <begin position="113"/>
        <end position="132"/>
    </location>
</feature>
<feature type="topological domain" description="Extracellular" evidence="2">
    <location>
        <begin position="133"/>
        <end position="159"/>
    </location>
</feature>
<feature type="transmembrane region" description="Helical; Name=3" evidence="2">
    <location>
        <begin position="160"/>
        <end position="181"/>
    </location>
</feature>
<feature type="topological domain" description="Cytoplasmic" evidence="2">
    <location>
        <begin position="182"/>
        <end position="205"/>
    </location>
</feature>
<feature type="transmembrane region" description="Helical; Name=4" evidence="2">
    <location>
        <begin position="206"/>
        <end position="229"/>
    </location>
</feature>
<feature type="topological domain" description="Extracellular" evidence="2">
    <location>
        <begin position="230"/>
        <end position="256"/>
    </location>
</feature>
<feature type="transmembrane region" description="Helical; Name=5" evidence="2">
    <location>
        <begin position="257"/>
        <end position="278"/>
    </location>
</feature>
<feature type="topological domain" description="Cytoplasmic" evidence="2">
    <location>
        <begin position="279"/>
        <end position="306"/>
    </location>
</feature>
<feature type="transmembrane region" description="Helical; Name=6" evidence="2">
    <location>
        <begin position="307"/>
        <end position="328"/>
    </location>
</feature>
<feature type="topological domain" description="Extracellular" evidence="2">
    <location>
        <begin position="329"/>
        <end position="347"/>
    </location>
</feature>
<feature type="transmembrane region" description="Helical; Name=7" evidence="2">
    <location>
        <begin position="348"/>
        <end position="372"/>
    </location>
</feature>
<feature type="topological domain" description="Cytoplasmic" evidence="2">
    <location>
        <begin position="373"/>
        <end position="427"/>
    </location>
</feature>
<feature type="region of interest" description="Disordered" evidence="4">
    <location>
        <begin position="406"/>
        <end position="427"/>
    </location>
</feature>
<feature type="compositionally biased region" description="Basic and acidic residues" evidence="4">
    <location>
        <begin position="408"/>
        <end position="427"/>
    </location>
</feature>
<feature type="modified residue" description="Phosphoserine" evidence="1">
    <location>
        <position position="425"/>
    </location>
</feature>
<feature type="glycosylation site" description="N-linked (GlcNAc...) asparagine" evidence="2">
    <location>
        <position position="29"/>
    </location>
</feature>
<feature type="glycosylation site" description="N-linked (GlcNAc...) asparagine" evidence="2">
    <location>
        <position position="62"/>
    </location>
</feature>
<feature type="disulfide bond" evidence="3">
    <location>
        <begin position="158"/>
        <end position="239"/>
    </location>
</feature>
<feature type="splice variant" id="VSP_045578" description="In isoform 5." evidence="10">
    <location>
        <begin position="1"/>
        <end position="225"/>
    </location>
</feature>
<feature type="splice variant" id="VSP_011061" description="In isoform 4." evidence="11">
    <location>
        <begin position="141"/>
        <end position="249"/>
    </location>
</feature>
<feature type="splice variant" id="VSP_011059" description="In isoform 2." evidence="12">
    <original>LLAGRWPFDHNDFGVFLCKLF</original>
    <variation>VQSSCLLESCSGNWDSFGNCH</variation>
    <location>
        <begin position="141"/>
        <end position="161"/>
    </location>
</feature>
<feature type="splice variant" id="VSP_011060" description="In isoform 2." evidence="12">
    <location>
        <begin position="162"/>
        <end position="427"/>
    </location>
</feature>
<feature type="splice variant" id="VSP_011062" description="In isoform 3." evidence="11">
    <original>RYRAV</original>
    <variation>SSTKM</variation>
    <location>
        <begin position="183"/>
        <end position="187"/>
    </location>
</feature>
<feature type="splice variant" id="VSP_011063" description="In isoform 3." evidence="11">
    <location>
        <begin position="188"/>
        <end position="427"/>
    </location>
</feature>
<feature type="sequence variant" id="VAR_073788" description="In MFDA; dbSNP:rs786205230." evidence="7">
    <original>Y</original>
    <variation>F</variation>
    <location>
        <position position="129"/>
    </location>
</feature>
<feature type="sequence variant" id="VAR_035758" description="In a breast cancer sample; somatic mutation." evidence="6">
    <original>I</original>
    <variation>L</variation>
    <location>
        <position position="136"/>
    </location>
</feature>
<feature type="sequence variant" id="VAR_073789" description="In MFDA; dbSNP:rs876657388." evidence="7">
    <original>E</original>
    <variation>K</variation>
    <location>
        <position position="303"/>
    </location>
</feature>
<feature type="sequence conflict" description="In Ref. 7; AAB23644." evidence="13" ref="7">
    <original>C</original>
    <variation>Y</variation>
    <location>
        <position position="110"/>
    </location>
</feature>
<feature type="sequence conflict" description="In Ref. 14; AAH22511." evidence="13" ref="14">
    <original>P</original>
    <variation>H</variation>
    <location>
        <position position="115"/>
    </location>
</feature>
<feature type="sequence conflict" description="In Ref. 5; AAA58447." evidence="13" ref="5">
    <original>V</original>
    <variation>A</variation>
    <location>
        <position position="207"/>
    </location>
</feature>
<feature type="sequence conflict" description="In Ref. 11; BAH14302." evidence="13" ref="11">
    <original>R</original>
    <variation>K</variation>
    <location>
        <position position="232"/>
    </location>
</feature>
<feature type="sequence conflict" description="In Ref. 5; AAA58447." evidence="13" ref="5">
    <original>E</original>
    <variation>G</variation>
    <location>
        <position position="234"/>
    </location>
</feature>
<feature type="sequence conflict" description="In Ref. 5; AAA58447." evidence="13" ref="5">
    <original>C</original>
    <variation>G</variation>
    <location>
        <position position="280"/>
    </location>
</feature>
<feature type="sequence conflict" description="In Ref. 11; BAG65268." evidence="13" ref="11">
    <original>Q</original>
    <variation>H</variation>
    <location>
        <position position="300"/>
    </location>
</feature>
<feature type="sequence conflict" description="In Ref. 14; AAH22511." evidence="13" ref="14">
    <original>L</original>
    <variation>V</variation>
    <location>
        <position position="322"/>
    </location>
</feature>
<feature type="sequence conflict" description="In Ref. 11; BAG65268." evidence="13" ref="11">
    <original>S</original>
    <variation>G</variation>
    <location>
        <position position="345"/>
    </location>
</feature>
<feature type="sequence conflict" description="In Ref. 14; AAH22511." evidence="13" ref="14">
    <original>N</original>
    <variation>D</variation>
    <location>
        <position position="409"/>
    </location>
</feature>
<feature type="helix" evidence="15">
    <location>
        <begin position="77"/>
        <end position="108"/>
    </location>
</feature>
<feature type="helix" evidence="15">
    <location>
        <begin position="114"/>
        <end position="142"/>
    </location>
</feature>
<feature type="strand" evidence="15">
    <location>
        <begin position="143"/>
        <end position="145"/>
    </location>
</feature>
<feature type="turn" evidence="16">
    <location>
        <begin position="147"/>
        <end position="150"/>
    </location>
</feature>
<feature type="helix" evidence="15">
    <location>
        <begin position="152"/>
        <end position="158"/>
    </location>
</feature>
<feature type="helix" evidence="15">
    <location>
        <begin position="161"/>
        <end position="188"/>
    </location>
</feature>
<feature type="helix" evidence="15">
    <location>
        <begin position="200"/>
        <end position="221"/>
    </location>
</feature>
<feature type="strand" evidence="16">
    <location>
        <begin position="225"/>
        <end position="227"/>
    </location>
</feature>
<feature type="strand" evidence="16">
    <location>
        <begin position="238"/>
        <end position="240"/>
    </location>
</feature>
<feature type="helix" evidence="15">
    <location>
        <begin position="246"/>
        <end position="252"/>
    </location>
</feature>
<feature type="helix" evidence="15">
    <location>
        <begin position="255"/>
        <end position="263"/>
    </location>
</feature>
<feature type="helix" evidence="15">
    <location>
        <begin position="265"/>
        <end position="282"/>
    </location>
</feature>
<feature type="helix" evidence="15">
    <location>
        <begin position="298"/>
        <end position="329"/>
    </location>
</feature>
<feature type="helix" evidence="15">
    <location>
        <begin position="340"/>
        <end position="372"/>
    </location>
</feature>
<feature type="helix" evidence="16">
    <location>
        <begin position="376"/>
        <end position="381"/>
    </location>
</feature>
<dbReference type="EMBL" id="S63938">
    <property type="protein sequence ID" value="AAB20278.1"/>
    <property type="molecule type" value="mRNA"/>
</dbReference>
<dbReference type="EMBL" id="S67127">
    <property type="protein sequence ID" value="AAB20407.1"/>
    <property type="molecule type" value="mRNA"/>
</dbReference>
<dbReference type="EMBL" id="X61950">
    <property type="protein sequence ID" value="CAA43953.1"/>
    <property type="molecule type" value="mRNA"/>
</dbReference>
<dbReference type="EMBL" id="D90348">
    <property type="protein sequence ID" value="BAA14359.1"/>
    <property type="molecule type" value="mRNA"/>
</dbReference>
<dbReference type="EMBL" id="S57498">
    <property type="protein sequence ID" value="AAB25530.2"/>
    <property type="molecule type" value="mRNA"/>
</dbReference>
<dbReference type="EMBL" id="L06622">
    <property type="protein sequence ID" value="AAA58447.1"/>
    <property type="molecule type" value="mRNA"/>
</dbReference>
<dbReference type="EMBL" id="D11151">
    <property type="protein sequence ID" value="BAA01920.1"/>
    <property type="molecule type" value="Genomic_DNA"/>
</dbReference>
<dbReference type="EMBL" id="S45956">
    <property type="protein sequence ID" value="AAB23644.1"/>
    <property type="molecule type" value="mRNA"/>
</dbReference>
<dbReference type="EMBL" id="S81539">
    <property type="protein sequence ID" value="AAB36325.1"/>
    <property type="molecule type" value="mRNA"/>
</dbReference>
<dbReference type="EMBL" id="S81542">
    <property type="protein sequence ID" value="AAB36326.1"/>
    <property type="molecule type" value="mRNA"/>
</dbReference>
<dbReference type="EMBL" id="S81545">
    <property type="protein sequence ID" value="AAB36327.1"/>
    <property type="molecule type" value="mRNA"/>
</dbReference>
<dbReference type="EMBL" id="AY275462">
    <property type="protein sequence ID" value="AAP32294.1"/>
    <property type="molecule type" value="mRNA"/>
</dbReference>
<dbReference type="EMBL" id="AY422989">
    <property type="protein sequence ID" value="AAQ87880.1"/>
    <property type="molecule type" value="Genomic_DNA"/>
</dbReference>
<dbReference type="EMBL" id="AK304451">
    <property type="protein sequence ID" value="BAG65268.1"/>
    <property type="molecule type" value="mRNA"/>
</dbReference>
<dbReference type="EMBL" id="AK312812">
    <property type="protein sequence ID" value="BAG35670.1"/>
    <property type="molecule type" value="mRNA"/>
</dbReference>
<dbReference type="EMBL" id="AK315931">
    <property type="protein sequence ID" value="BAH14302.1"/>
    <property type="molecule type" value="mRNA"/>
</dbReference>
<dbReference type="EMBL" id="AC093908">
    <property type="status" value="NOT_ANNOTATED_CDS"/>
    <property type="molecule type" value="Genomic_DNA"/>
</dbReference>
<dbReference type="EMBL" id="CH471056">
    <property type="protein sequence ID" value="EAX05019.1"/>
    <property type="molecule type" value="Genomic_DNA"/>
</dbReference>
<dbReference type="EMBL" id="CH471056">
    <property type="protein sequence ID" value="EAX05021.1"/>
    <property type="molecule type" value="Genomic_DNA"/>
</dbReference>
<dbReference type="EMBL" id="BC022511">
    <property type="protein sequence ID" value="AAH22511.1"/>
    <property type="molecule type" value="mRNA"/>
</dbReference>
<dbReference type="EMBL" id="S55772">
    <property type="protein sequence ID" value="AAB25212.1"/>
    <property type="molecule type" value="Genomic_DNA"/>
</dbReference>
<dbReference type="EMBL" id="AF014826">
    <property type="protein sequence ID" value="AAB94859.1"/>
    <property type="molecule type" value="mRNA"/>
</dbReference>
<dbReference type="CCDS" id="CCDS3769.1">
    <molecule id="P25101-1"/>
</dbReference>
<dbReference type="CCDS" id="CCDS54810.1">
    <molecule id="P25101-4"/>
</dbReference>
<dbReference type="PIR" id="A44158">
    <property type="entry name" value="A44158"/>
</dbReference>
<dbReference type="RefSeq" id="NP_001159527.1">
    <molecule id="P25101-4"/>
    <property type="nucleotide sequence ID" value="NM_001166055.2"/>
</dbReference>
<dbReference type="RefSeq" id="NP_001243212.1">
    <property type="nucleotide sequence ID" value="NM_001256283.1"/>
</dbReference>
<dbReference type="RefSeq" id="NP_001948.1">
    <molecule id="P25101-1"/>
    <property type="nucleotide sequence ID" value="NM_001957.4"/>
</dbReference>
<dbReference type="PDB" id="8HCQ">
    <property type="method" value="EM"/>
    <property type="resolution" value="3.01 A"/>
    <property type="chains" value="R=20-406"/>
</dbReference>
<dbReference type="PDB" id="8XVI">
    <property type="method" value="EM"/>
    <property type="resolution" value="3.32 A"/>
    <property type="chains" value="R=50-405"/>
</dbReference>
<dbReference type="PDB" id="8XVJ">
    <property type="method" value="EM"/>
    <property type="resolution" value="3.26 A"/>
    <property type="chains" value="R=50-280, R=298-405"/>
</dbReference>
<dbReference type="PDB" id="8XVK">
    <property type="method" value="EM"/>
    <property type="resolution" value="3.21 A"/>
    <property type="chains" value="R=50-280, R=298-405"/>
</dbReference>
<dbReference type="PDB" id="8XVL">
    <property type="method" value="EM"/>
    <property type="resolution" value="3.22 A"/>
    <property type="chains" value="R=50-280, R=298-405"/>
</dbReference>
<dbReference type="PDBsum" id="8HCQ"/>
<dbReference type="PDBsum" id="8XVI"/>
<dbReference type="PDBsum" id="8XVJ"/>
<dbReference type="PDBsum" id="8XVK"/>
<dbReference type="PDBsum" id="8XVL"/>
<dbReference type="EMDB" id="EMD-38705"/>
<dbReference type="EMDB" id="EMD-38706"/>
<dbReference type="EMDB" id="EMD-38707"/>
<dbReference type="EMDB" id="EMD-38708"/>
<dbReference type="SMR" id="P25101"/>
<dbReference type="BioGRID" id="108231">
    <property type="interactions" value="62"/>
</dbReference>
<dbReference type="CORUM" id="P25101"/>
<dbReference type="DIP" id="DIP-48718N"/>
<dbReference type="FunCoup" id="P25101">
    <property type="interactions" value="1457"/>
</dbReference>
<dbReference type="IntAct" id="P25101">
    <property type="interactions" value="41"/>
</dbReference>
<dbReference type="STRING" id="9606.ENSP00000315011"/>
<dbReference type="BindingDB" id="P25101"/>
<dbReference type="ChEMBL" id="CHEMBL252"/>
<dbReference type="DrugBank" id="DB04674">
    <property type="generic name" value="2-HYDROXY-3,5-DIIODOBENZOIC ACID"/>
</dbReference>
<dbReference type="DrugBank" id="DB00945">
    <property type="generic name" value="Acetylsalicylic acid"/>
</dbReference>
<dbReference type="DrugBank" id="DB05367">
    <property type="generic name" value="Actelion-1"/>
</dbReference>
<dbReference type="DrugBank" id="DB06403">
    <property type="generic name" value="Ambrisentan"/>
</dbReference>
<dbReference type="DrugBank" id="DB15059">
    <property type="generic name" value="Aprocitentan"/>
</dbReference>
<dbReference type="DrugBank" id="DB06199">
    <property type="generic name" value="Atrasentan"/>
</dbReference>
<dbReference type="DrugBank" id="DB00559">
    <property type="generic name" value="Bosentan"/>
</dbReference>
<dbReference type="DrugBank" id="DB12054">
    <property type="generic name" value="BQ-123"/>
</dbReference>
<dbReference type="DrugBank" id="DB06677">
    <property type="generic name" value="Clazosentan"/>
</dbReference>
<dbReference type="DrugBank" id="DB04883">
    <property type="generic name" value="Darusentan"/>
</dbReference>
<dbReference type="DrugBank" id="DB06460">
    <property type="generic name" value="Enrasentan"/>
</dbReference>
<dbReference type="DrugBank" id="DB08932">
    <property type="generic name" value="Macitentan"/>
</dbReference>
<dbReference type="DrugBank" id="DB06268">
    <property type="generic name" value="Sitaxentan"/>
</dbReference>
<dbReference type="DrugBank" id="DB12548">
    <property type="generic name" value="Sparsentan"/>
</dbReference>
<dbReference type="DrugBank" id="DB05290">
    <property type="generic name" value="SPP 301"/>
</dbReference>
<dbReference type="DrugBank" id="DB05407">
    <property type="generic name" value="TBC-3711"/>
</dbReference>
<dbReference type="DrugBank" id="DB06558">
    <property type="generic name" value="Tezosentan"/>
</dbReference>
<dbReference type="DrugBank" id="DB06629">
    <property type="generic name" value="Zibotentan"/>
</dbReference>
<dbReference type="DrugCentral" id="P25101"/>
<dbReference type="GuidetoPHARMACOLOGY" id="219"/>
<dbReference type="GlyCosmos" id="P25101">
    <property type="glycosylation" value="2 sites, No reported glycans"/>
</dbReference>
<dbReference type="GlyGen" id="P25101">
    <property type="glycosylation" value="4 sites, 2 N-linked glycans (2 sites), 1 O-linked glycan (1 site)"/>
</dbReference>
<dbReference type="iPTMnet" id="P25101"/>
<dbReference type="PhosphoSitePlus" id="P25101"/>
<dbReference type="SwissPalm" id="P25101"/>
<dbReference type="BioMuta" id="EDNRA"/>
<dbReference type="DMDM" id="119606"/>
<dbReference type="MassIVE" id="P25101"/>
<dbReference type="PaxDb" id="9606-ENSP00000315011"/>
<dbReference type="PeptideAtlas" id="P25101"/>
<dbReference type="ProteomicsDB" id="17708"/>
<dbReference type="ProteomicsDB" id="54256">
    <molecule id="P25101-1"/>
</dbReference>
<dbReference type="ProteomicsDB" id="54258">
    <molecule id="P25101-3"/>
</dbReference>
<dbReference type="ProteomicsDB" id="54259">
    <molecule id="P25101-4"/>
</dbReference>
<dbReference type="Antibodypedia" id="2942">
    <property type="antibodies" value="356 antibodies from 34 providers"/>
</dbReference>
<dbReference type="DNASU" id="1909"/>
<dbReference type="Ensembl" id="ENST00000324300.10">
    <molecule id="P25101-1"/>
    <property type="protein sequence ID" value="ENSP00000315011.5"/>
    <property type="gene ID" value="ENSG00000151617.17"/>
</dbReference>
<dbReference type="Ensembl" id="ENST00000358556.8">
    <molecule id="P25101-4"/>
    <property type="protein sequence ID" value="ENSP00000351359.4"/>
    <property type="gene ID" value="ENSG00000151617.17"/>
</dbReference>
<dbReference type="Ensembl" id="ENST00000506066.1">
    <molecule id="P25101-4"/>
    <property type="protein sequence ID" value="ENSP00000425281.1"/>
    <property type="gene ID" value="ENSG00000151617.17"/>
</dbReference>
<dbReference type="Ensembl" id="ENST00000510697.5">
    <molecule id="P25101-3"/>
    <property type="protein sequence ID" value="ENSP00000427259.1"/>
    <property type="gene ID" value="ENSG00000151617.17"/>
</dbReference>
<dbReference type="Ensembl" id="ENST00000511804.5">
    <molecule id="P25101-5"/>
    <property type="protein sequence ID" value="ENSP00000425354.1"/>
    <property type="gene ID" value="ENSG00000151617.17"/>
</dbReference>
<dbReference type="Ensembl" id="ENST00000648866.1">
    <molecule id="P25101-5"/>
    <property type="protein sequence ID" value="ENSP00000496976.1"/>
    <property type="gene ID" value="ENSG00000151617.17"/>
</dbReference>
<dbReference type="Ensembl" id="ENST00000651419.1">
    <molecule id="P25101-1"/>
    <property type="protein sequence ID" value="ENSP00000498969.1"/>
    <property type="gene ID" value="ENSG00000151617.17"/>
</dbReference>
<dbReference type="GeneID" id="1909"/>
<dbReference type="KEGG" id="hsa:1909"/>
<dbReference type="MANE-Select" id="ENST00000651419.1">
    <property type="protein sequence ID" value="ENSP00000498969.1"/>
    <property type="RefSeq nucleotide sequence ID" value="NM_001957.4"/>
    <property type="RefSeq protein sequence ID" value="NP_001948.1"/>
</dbReference>
<dbReference type="UCSC" id="uc003iky.4">
    <molecule id="P25101-1"/>
    <property type="organism name" value="human"/>
</dbReference>
<dbReference type="AGR" id="HGNC:3179"/>
<dbReference type="CTD" id="1909"/>
<dbReference type="DisGeNET" id="1909"/>
<dbReference type="GeneCards" id="EDNRA"/>
<dbReference type="HGNC" id="HGNC:3179">
    <property type="gene designation" value="EDNRA"/>
</dbReference>
<dbReference type="HPA" id="ENSG00000151617">
    <property type="expression patterns" value="Tissue enhanced (seminal)"/>
</dbReference>
<dbReference type="MalaCards" id="EDNRA"/>
<dbReference type="MIM" id="131243">
    <property type="type" value="gene"/>
</dbReference>
<dbReference type="MIM" id="616367">
    <property type="type" value="phenotype"/>
</dbReference>
<dbReference type="neXtProt" id="NX_P25101"/>
<dbReference type="OpenTargets" id="ENSG00000151617"/>
<dbReference type="Orphanet" id="586">
    <property type="disease" value="Cystic fibrosis"/>
</dbReference>
<dbReference type="Orphanet" id="443995">
    <property type="disease" value="Mandibulofacial dysostosis with alopecia"/>
</dbReference>
<dbReference type="PharmGKB" id="PA27617"/>
<dbReference type="VEuPathDB" id="HostDB:ENSG00000151617"/>
<dbReference type="eggNOG" id="KOG3656">
    <property type="taxonomic scope" value="Eukaryota"/>
</dbReference>
<dbReference type="GeneTree" id="ENSGT01120000271837"/>
<dbReference type="HOGENOM" id="CLU_096205_1_0_1"/>
<dbReference type="InParanoid" id="P25101"/>
<dbReference type="OMA" id="YNERDPG"/>
<dbReference type="OrthoDB" id="10049706at2759"/>
<dbReference type="PAN-GO" id="P25101">
    <property type="GO annotations" value="5 GO annotations based on evolutionary models"/>
</dbReference>
<dbReference type="PhylomeDB" id="P25101"/>
<dbReference type="TreeFam" id="TF331292"/>
<dbReference type="PathwayCommons" id="P25101"/>
<dbReference type="Reactome" id="R-HSA-375276">
    <property type="pathway name" value="Peptide ligand-binding receptors"/>
</dbReference>
<dbReference type="Reactome" id="R-HSA-416476">
    <property type="pathway name" value="G alpha (q) signalling events"/>
</dbReference>
<dbReference type="SignaLink" id="P25101"/>
<dbReference type="SIGNOR" id="P25101"/>
<dbReference type="BioGRID-ORCS" id="1909">
    <property type="hits" value="8 hits in 1156 CRISPR screens"/>
</dbReference>
<dbReference type="ChiTaRS" id="EDNRA">
    <property type="organism name" value="human"/>
</dbReference>
<dbReference type="GeneWiki" id="Endothelin_receptor_type_A"/>
<dbReference type="GenomeRNAi" id="1909"/>
<dbReference type="Pharos" id="P25101">
    <property type="development level" value="Tclin"/>
</dbReference>
<dbReference type="PRO" id="PR:P25101"/>
<dbReference type="Proteomes" id="UP000005640">
    <property type="component" value="Chromosome 4"/>
</dbReference>
<dbReference type="RNAct" id="P25101">
    <property type="molecule type" value="protein"/>
</dbReference>
<dbReference type="Bgee" id="ENSG00000151617">
    <property type="expression patterns" value="Expressed in cauda epididymis and 187 other cell types or tissues"/>
</dbReference>
<dbReference type="GO" id="GO:0005886">
    <property type="term" value="C:plasma membrane"/>
    <property type="evidence" value="ECO:0000318"/>
    <property type="project" value="GO_Central"/>
</dbReference>
<dbReference type="GO" id="GO:0004962">
    <property type="term" value="F:endothelin receptor activity"/>
    <property type="evidence" value="ECO:0000318"/>
    <property type="project" value="GO_Central"/>
</dbReference>
<dbReference type="GO" id="GO:0004435">
    <property type="term" value="F:phosphatidylinositol-4,5-bisphosphate phospholipase C activity"/>
    <property type="evidence" value="ECO:0000304"/>
    <property type="project" value="ProtInc"/>
</dbReference>
<dbReference type="GO" id="GO:0007190">
    <property type="term" value="P:activation of adenylate cyclase activity"/>
    <property type="evidence" value="ECO:0000304"/>
    <property type="project" value="ProtInc"/>
</dbReference>
<dbReference type="GO" id="GO:0007193">
    <property type="term" value="P:adenylate cyclase-inhibiting G protein-coupled receptor signaling pathway"/>
    <property type="evidence" value="ECO:0007669"/>
    <property type="project" value="Ensembl"/>
</dbReference>
<dbReference type="GO" id="GO:0035904">
    <property type="term" value="P:aorta development"/>
    <property type="evidence" value="ECO:0007669"/>
    <property type="project" value="Ensembl"/>
</dbReference>
<dbReference type="GO" id="GO:0014824">
    <property type="term" value="P:artery smooth muscle contraction"/>
    <property type="evidence" value="ECO:0000315"/>
    <property type="project" value="BHF-UCL"/>
</dbReference>
<dbReference type="GO" id="GO:0003228">
    <property type="term" value="P:atrial cardiac muscle tissue development"/>
    <property type="evidence" value="ECO:0007669"/>
    <property type="project" value="Ensembl"/>
</dbReference>
<dbReference type="GO" id="GO:0048675">
    <property type="term" value="P:axon extension"/>
    <property type="evidence" value="ECO:0007669"/>
    <property type="project" value="Ensembl"/>
</dbReference>
<dbReference type="GO" id="GO:0060385">
    <property type="term" value="P:axonogenesis involved in innervation"/>
    <property type="evidence" value="ECO:0007669"/>
    <property type="project" value="Ensembl"/>
</dbReference>
<dbReference type="GO" id="GO:0001974">
    <property type="term" value="P:blood vessel remodeling"/>
    <property type="evidence" value="ECO:0007669"/>
    <property type="project" value="Ensembl"/>
</dbReference>
<dbReference type="GO" id="GO:0001569">
    <property type="term" value="P:branching involved in blood vessel morphogenesis"/>
    <property type="evidence" value="ECO:0007669"/>
    <property type="project" value="Ensembl"/>
</dbReference>
<dbReference type="GO" id="GO:0070588">
    <property type="term" value="P:calcium ion transmembrane transport"/>
    <property type="evidence" value="ECO:0007669"/>
    <property type="project" value="Ensembl"/>
</dbReference>
<dbReference type="GO" id="GO:0141156">
    <property type="term" value="P:cAMP/PKA signal transduction"/>
    <property type="evidence" value="ECO:0000314"/>
    <property type="project" value="MGI"/>
</dbReference>
<dbReference type="GO" id="GO:0060070">
    <property type="term" value="P:canonical Wnt signaling pathway"/>
    <property type="evidence" value="ECO:0007669"/>
    <property type="project" value="Ensembl"/>
</dbReference>
<dbReference type="GO" id="GO:0003207">
    <property type="term" value="P:cardiac chamber formation"/>
    <property type="evidence" value="ECO:0007669"/>
    <property type="project" value="Ensembl"/>
</dbReference>
<dbReference type="GO" id="GO:0003253">
    <property type="term" value="P:cardiac neural crest cell migration involved in outflow tract morphogenesis"/>
    <property type="evidence" value="ECO:0007669"/>
    <property type="project" value="Ensembl"/>
</dbReference>
<dbReference type="GO" id="GO:0008283">
    <property type="term" value="P:cell population proliferation"/>
    <property type="evidence" value="ECO:0000304"/>
    <property type="project" value="ProtInc"/>
</dbReference>
<dbReference type="GO" id="GO:0071372">
    <property type="term" value="P:cellular response to follicle-stimulating hormone stimulus"/>
    <property type="evidence" value="ECO:0007669"/>
    <property type="project" value="Ensembl"/>
</dbReference>
<dbReference type="GO" id="GO:0044751">
    <property type="term" value="P:cellular response to human chorionic gonadotropin stimulus"/>
    <property type="evidence" value="ECO:0007669"/>
    <property type="project" value="Ensembl"/>
</dbReference>
<dbReference type="GO" id="GO:0071373">
    <property type="term" value="P:cellular response to luteinizing hormone stimulus"/>
    <property type="evidence" value="ECO:0007669"/>
    <property type="project" value="Ensembl"/>
</dbReference>
<dbReference type="GO" id="GO:0034599">
    <property type="term" value="P:cellular response to oxidative stress"/>
    <property type="evidence" value="ECO:0007669"/>
    <property type="project" value="Ensembl"/>
</dbReference>
<dbReference type="GO" id="GO:0097237">
    <property type="term" value="P:cellular response to toxic substance"/>
    <property type="evidence" value="ECO:0007669"/>
    <property type="project" value="Ensembl"/>
</dbReference>
<dbReference type="GO" id="GO:1904888">
    <property type="term" value="P:cranial skeletal system development"/>
    <property type="evidence" value="ECO:0007669"/>
    <property type="project" value="Ensembl"/>
</dbReference>
<dbReference type="GO" id="GO:0048066">
    <property type="term" value="P:developmental pigmentation"/>
    <property type="evidence" value="ECO:0000318"/>
    <property type="project" value="GO_Central"/>
</dbReference>
<dbReference type="GO" id="GO:0035050">
    <property type="term" value="P:embryonic heart tube development"/>
    <property type="evidence" value="ECO:0007669"/>
    <property type="project" value="Ensembl"/>
</dbReference>
<dbReference type="GO" id="GO:0048706">
    <property type="term" value="P:embryonic skeletal system development"/>
    <property type="evidence" value="ECO:0007669"/>
    <property type="project" value="Ensembl"/>
</dbReference>
<dbReference type="GO" id="GO:0086100">
    <property type="term" value="P:endothelin receptor signaling pathway"/>
    <property type="evidence" value="ECO:0000318"/>
    <property type="project" value="GO_Central"/>
</dbReference>
<dbReference type="GO" id="GO:0086101">
    <property type="term" value="P:endothelin receptor signaling pathway involved in heart process"/>
    <property type="evidence" value="ECO:0007669"/>
    <property type="project" value="Ensembl"/>
</dbReference>
<dbReference type="GO" id="GO:0048484">
    <property type="term" value="P:enteric nervous system development"/>
    <property type="evidence" value="ECO:0007669"/>
    <property type="project" value="InterPro"/>
</dbReference>
<dbReference type="GO" id="GO:0061028">
    <property type="term" value="P:establishment of endothelial barrier"/>
    <property type="evidence" value="ECO:0007669"/>
    <property type="project" value="Ensembl"/>
</dbReference>
<dbReference type="GO" id="GO:0060324">
    <property type="term" value="P:face development"/>
    <property type="evidence" value="ECO:0007669"/>
    <property type="project" value="Ensembl"/>
</dbReference>
<dbReference type="GO" id="GO:0007186">
    <property type="term" value="P:G protein-coupled receptor signaling pathway"/>
    <property type="evidence" value="ECO:0000303"/>
    <property type="project" value="UniProtKB"/>
</dbReference>
<dbReference type="GO" id="GO:0010467">
    <property type="term" value="P:gene expression"/>
    <property type="evidence" value="ECO:0007669"/>
    <property type="project" value="Ensembl"/>
</dbReference>
<dbReference type="GO" id="GO:0072011">
    <property type="term" value="P:glomerular endothelium development"/>
    <property type="evidence" value="ECO:0007669"/>
    <property type="project" value="Ensembl"/>
</dbReference>
<dbReference type="GO" id="GO:0003094">
    <property type="term" value="P:glomerular filtration"/>
    <property type="evidence" value="ECO:0007669"/>
    <property type="project" value="Ensembl"/>
</dbReference>
<dbReference type="GO" id="GO:0030202">
    <property type="term" value="P:heparin proteoglycan metabolic process"/>
    <property type="evidence" value="ECO:0007669"/>
    <property type="project" value="Ensembl"/>
</dbReference>
<dbReference type="GO" id="GO:0001701">
    <property type="term" value="P:in utero embryonic development"/>
    <property type="evidence" value="ECO:0007669"/>
    <property type="project" value="Ensembl"/>
</dbReference>
<dbReference type="GO" id="GO:0006874">
    <property type="term" value="P:intracellular calcium ion homeostasis"/>
    <property type="evidence" value="ECO:0000314"/>
    <property type="project" value="MGI"/>
</dbReference>
<dbReference type="GO" id="GO:0003220">
    <property type="term" value="P:left ventricular cardiac muscle tissue morphogenesis"/>
    <property type="evidence" value="ECO:0007669"/>
    <property type="project" value="Ensembl"/>
</dbReference>
<dbReference type="GO" id="GO:1903537">
    <property type="term" value="P:meiotic cell cycle process involved in oocyte maturation"/>
    <property type="evidence" value="ECO:0007669"/>
    <property type="project" value="Ensembl"/>
</dbReference>
<dbReference type="GO" id="GO:0097152">
    <property type="term" value="P:mesenchymal cell apoptotic process"/>
    <property type="evidence" value="ECO:0007669"/>
    <property type="project" value="Ensembl"/>
</dbReference>
<dbReference type="GO" id="GO:0042474">
    <property type="term" value="P:middle ear morphogenesis"/>
    <property type="evidence" value="ECO:0007669"/>
    <property type="project" value="Ensembl"/>
</dbReference>
<dbReference type="GO" id="GO:0007005">
    <property type="term" value="P:mitochondrion organization"/>
    <property type="evidence" value="ECO:0007669"/>
    <property type="project" value="Ensembl"/>
</dbReference>
<dbReference type="GO" id="GO:0000278">
    <property type="term" value="P:mitotic cell cycle"/>
    <property type="evidence" value="ECO:0007669"/>
    <property type="project" value="Ensembl"/>
</dbReference>
<dbReference type="GO" id="GO:0014034">
    <property type="term" value="P:neural crest cell fate commitment"/>
    <property type="evidence" value="ECO:0007669"/>
    <property type="project" value="Ensembl"/>
</dbReference>
<dbReference type="GO" id="GO:0050905">
    <property type="term" value="P:neuromuscular process"/>
    <property type="evidence" value="ECO:0007669"/>
    <property type="project" value="Ensembl"/>
</dbReference>
<dbReference type="GO" id="GO:0016322">
    <property type="term" value="P:neuron remodeling"/>
    <property type="evidence" value="ECO:0007669"/>
    <property type="project" value="Ensembl"/>
</dbReference>
<dbReference type="GO" id="GO:0003357">
    <property type="term" value="P:noradrenergic neuron differentiation"/>
    <property type="evidence" value="ECO:0007669"/>
    <property type="project" value="Ensembl"/>
</dbReference>
<dbReference type="GO" id="GO:0042415">
    <property type="term" value="P:norepinephrine metabolic process"/>
    <property type="evidence" value="ECO:0007669"/>
    <property type="project" value="Ensembl"/>
</dbReference>
<dbReference type="GO" id="GO:0061626">
    <property type="term" value="P:pharyngeal arch artery morphogenesis"/>
    <property type="evidence" value="ECO:0007669"/>
    <property type="project" value="Ensembl"/>
</dbReference>
<dbReference type="GO" id="GO:0007200">
    <property type="term" value="P:phospholipase C-activating G protein-coupled receptor signaling pathway"/>
    <property type="evidence" value="ECO:0000304"/>
    <property type="project" value="ProtInc"/>
</dbReference>
<dbReference type="GO" id="GO:1903210">
    <property type="term" value="P:podocyte apoptotic process"/>
    <property type="evidence" value="ECO:0007669"/>
    <property type="project" value="Ensembl"/>
</dbReference>
<dbReference type="GO" id="GO:0072112">
    <property type="term" value="P:podocyte differentiation"/>
    <property type="evidence" value="ECO:0007669"/>
    <property type="project" value="Ensembl"/>
</dbReference>
<dbReference type="GO" id="GO:0043123">
    <property type="term" value="P:positive regulation of canonical NF-kappaB signal transduction"/>
    <property type="evidence" value="ECO:0007669"/>
    <property type="project" value="Ensembl"/>
</dbReference>
<dbReference type="GO" id="GO:2001259">
    <property type="term" value="P:positive regulation of cation channel activity"/>
    <property type="evidence" value="ECO:0000314"/>
    <property type="project" value="MGI"/>
</dbReference>
<dbReference type="GO" id="GO:0007204">
    <property type="term" value="P:positive regulation of cytosolic calcium ion concentration"/>
    <property type="evidence" value="ECO:0000304"/>
    <property type="project" value="ProtInc"/>
</dbReference>
<dbReference type="GO" id="GO:0071806">
    <property type="term" value="P:protein transmembrane transport"/>
    <property type="evidence" value="ECO:0007669"/>
    <property type="project" value="Ensembl"/>
</dbReference>
<dbReference type="GO" id="GO:0008217">
    <property type="term" value="P:regulation of blood pressure"/>
    <property type="evidence" value="ECO:0007669"/>
    <property type="project" value="Ensembl"/>
</dbReference>
<dbReference type="GO" id="GO:0010827">
    <property type="term" value="P:regulation of D-glucose transmembrane transport"/>
    <property type="evidence" value="ECO:0007669"/>
    <property type="project" value="Ensembl"/>
</dbReference>
<dbReference type="GO" id="GO:0002027">
    <property type="term" value="P:regulation of heart rate"/>
    <property type="evidence" value="ECO:0007669"/>
    <property type="project" value="Ensembl"/>
</dbReference>
<dbReference type="GO" id="GO:1905871">
    <property type="term" value="P:regulation of protein localization to cell leading edge"/>
    <property type="evidence" value="ECO:0007669"/>
    <property type="project" value="Ensembl"/>
</dbReference>
<dbReference type="GO" id="GO:0097018">
    <property type="term" value="P:renal albumin absorption"/>
    <property type="evidence" value="ECO:0007669"/>
    <property type="project" value="Ensembl"/>
</dbReference>
<dbReference type="GO" id="GO:0070294">
    <property type="term" value="P:renal sodium ion absorption"/>
    <property type="evidence" value="ECO:0007669"/>
    <property type="project" value="Ensembl"/>
</dbReference>
<dbReference type="GO" id="GO:0007585">
    <property type="term" value="P:respiratory gaseous exchange by respiratory system"/>
    <property type="evidence" value="ECO:0000250"/>
    <property type="project" value="UniProtKB"/>
</dbReference>
<dbReference type="GO" id="GO:1905144">
    <property type="term" value="P:response to acetylcholine"/>
    <property type="evidence" value="ECO:0007669"/>
    <property type="project" value="Ensembl"/>
</dbReference>
<dbReference type="GO" id="GO:0001975">
    <property type="term" value="P:response to amphetamine"/>
    <property type="evidence" value="ECO:0007669"/>
    <property type="project" value="Ensembl"/>
</dbReference>
<dbReference type="GO" id="GO:0001666">
    <property type="term" value="P:response to hypoxia"/>
    <property type="evidence" value="ECO:0007669"/>
    <property type="project" value="Ensembl"/>
</dbReference>
<dbReference type="GO" id="GO:0009611">
    <property type="term" value="P:response to wounding"/>
    <property type="evidence" value="ECO:0007669"/>
    <property type="project" value="Ensembl"/>
</dbReference>
<dbReference type="GO" id="GO:1902287">
    <property type="term" value="P:semaphorin-plexin signaling pathway involved in axon guidance"/>
    <property type="evidence" value="ECO:0007669"/>
    <property type="project" value="Ensembl"/>
</dbReference>
<dbReference type="GO" id="GO:0007165">
    <property type="term" value="P:signal transduction"/>
    <property type="evidence" value="ECO:0000304"/>
    <property type="project" value="ProtInc"/>
</dbReference>
<dbReference type="GO" id="GO:0006939">
    <property type="term" value="P:smooth muscle contraction"/>
    <property type="evidence" value="ECO:0000304"/>
    <property type="project" value="ProtInc"/>
</dbReference>
<dbReference type="GO" id="GO:0055078">
    <property type="term" value="P:sodium ion homeostasis"/>
    <property type="evidence" value="ECO:0007669"/>
    <property type="project" value="Ensembl"/>
</dbReference>
<dbReference type="GO" id="GO:0048485">
    <property type="term" value="P:sympathetic nervous system development"/>
    <property type="evidence" value="ECO:0007669"/>
    <property type="project" value="Ensembl"/>
</dbReference>
<dbReference type="GO" id="GO:0097492">
    <property type="term" value="P:sympathetic neuron axon guidance"/>
    <property type="evidence" value="ECO:0007669"/>
    <property type="project" value="Ensembl"/>
</dbReference>
<dbReference type="GO" id="GO:0030878">
    <property type="term" value="P:thyroid gland development"/>
    <property type="evidence" value="ECO:0007669"/>
    <property type="project" value="Ensembl"/>
</dbReference>
<dbReference type="GO" id="GO:0097084">
    <property type="term" value="P:vascular associated smooth muscle cell development"/>
    <property type="evidence" value="ECO:0007669"/>
    <property type="project" value="Ensembl"/>
</dbReference>
<dbReference type="GO" id="GO:0042310">
    <property type="term" value="P:vasoconstriction"/>
    <property type="evidence" value="ECO:0000315"/>
    <property type="project" value="BHF-UCL"/>
</dbReference>
<dbReference type="CDD" id="cd15975">
    <property type="entry name" value="7tmA_ET-AR"/>
    <property type="match status" value="1"/>
</dbReference>
<dbReference type="FunFam" id="1.20.1070.10:FF:000076">
    <property type="entry name" value="Endothelin receptor type B"/>
    <property type="match status" value="1"/>
</dbReference>
<dbReference type="Gene3D" id="1.20.1070.10">
    <property type="entry name" value="Rhodopsin 7-helix transmembrane proteins"/>
    <property type="match status" value="1"/>
</dbReference>
<dbReference type="InterPro" id="IPR000499">
    <property type="entry name" value="Endthln_rcpt"/>
</dbReference>
<dbReference type="InterPro" id="IPR002175">
    <property type="entry name" value="ETA_rcpt"/>
</dbReference>
<dbReference type="InterPro" id="IPR051193">
    <property type="entry name" value="GPCR_endothelin_rcpt"/>
</dbReference>
<dbReference type="InterPro" id="IPR000276">
    <property type="entry name" value="GPCR_Rhodpsn"/>
</dbReference>
<dbReference type="InterPro" id="IPR017452">
    <property type="entry name" value="GPCR_Rhodpsn_7TM"/>
</dbReference>
<dbReference type="PANTHER" id="PTHR46099:SF2">
    <property type="entry name" value="ENDOTHELIN-1 RECEPTOR"/>
    <property type="match status" value="1"/>
</dbReference>
<dbReference type="PANTHER" id="PTHR46099">
    <property type="entry name" value="G_PROTEIN_RECEP_F1_2 DOMAIN-CONTAINING PROTEIN"/>
    <property type="match status" value="1"/>
</dbReference>
<dbReference type="Pfam" id="PF00001">
    <property type="entry name" value="7tm_1"/>
    <property type="match status" value="1"/>
</dbReference>
<dbReference type="PRINTS" id="PR00570">
    <property type="entry name" value="ENDOTHELINAR"/>
</dbReference>
<dbReference type="PRINTS" id="PR00366">
    <property type="entry name" value="ENDOTHELINR"/>
</dbReference>
<dbReference type="PRINTS" id="PR00237">
    <property type="entry name" value="GPCRRHODOPSN"/>
</dbReference>
<dbReference type="SUPFAM" id="SSF81321">
    <property type="entry name" value="Family A G protein-coupled receptor-like"/>
    <property type="match status" value="1"/>
</dbReference>
<dbReference type="PROSITE" id="PS00237">
    <property type="entry name" value="G_PROTEIN_RECEP_F1_1"/>
    <property type="match status" value="1"/>
</dbReference>
<dbReference type="PROSITE" id="PS50262">
    <property type="entry name" value="G_PROTEIN_RECEP_F1_2"/>
    <property type="match status" value="1"/>
</dbReference>
<organism>
    <name type="scientific">Homo sapiens</name>
    <name type="common">Human</name>
    <dbReference type="NCBI Taxonomy" id="9606"/>
    <lineage>
        <taxon>Eukaryota</taxon>
        <taxon>Metazoa</taxon>
        <taxon>Chordata</taxon>
        <taxon>Craniata</taxon>
        <taxon>Vertebrata</taxon>
        <taxon>Euteleostomi</taxon>
        <taxon>Mammalia</taxon>
        <taxon>Eutheria</taxon>
        <taxon>Euarchontoglires</taxon>
        <taxon>Primates</taxon>
        <taxon>Haplorrhini</taxon>
        <taxon>Catarrhini</taxon>
        <taxon>Hominidae</taxon>
        <taxon>Homo</taxon>
    </lineage>
</organism>
<accession>P25101</accession>
<accession>B2R723</accession>
<accession>B4E2V6</accession>
<accession>B7Z9G6</accession>
<accession>D3DP03</accession>
<accession>E7ER36</accession>
<accession>O43441</accession>
<accession>Q16432</accession>
<accession>Q16433</accession>
<accession>Q8TBH2</accession>
<comment type="function">
    <text>Receptor for endothelin-1. Mediates its action by association with G proteins that activate a phosphatidylinositol-calcium second messenger system. The rank order of binding affinities for ET-A is: ET1 &gt; ET2 &gt;&gt; ET3.</text>
</comment>
<comment type="subunit">
    <text evidence="5">Interacts with HDAC7 and KAT5.</text>
</comment>
<comment type="interaction">
    <interactant intactId="EBI-6624559">
        <id>P25101</id>
    </interactant>
    <interactant intactId="EBI-743313">
        <id>P49407</id>
        <label>ARRB1</label>
    </interactant>
    <organismsDiffer>false</organismsDiffer>
    <experiments>3</experiments>
</comment>
<comment type="interaction">
    <interactant intactId="EBI-6624559">
        <id>P25101</id>
    </interactant>
    <interactant intactId="EBI-714559">
        <id>P32121</id>
        <label>ARRB2</label>
    </interactant>
    <organismsDiffer>false</organismsDiffer>
    <experiments>2</experiments>
</comment>
<comment type="interaction">
    <interactant intactId="EBI-6624559">
        <id>P25101</id>
    </interactant>
    <interactant intactId="EBI-715181">
        <id>P05305</id>
        <label>EDN1</label>
    </interactant>
    <organismsDiffer>false</organismsDiffer>
    <experiments>2</experiments>
</comment>
<comment type="subcellular location">
    <subcellularLocation>
        <location>Cell membrane</location>
        <topology>Multi-pass membrane protein</topology>
    </subcellularLocation>
</comment>
<comment type="alternative products">
    <event type="alternative splicing"/>
    <isoform>
        <id>P25101-1</id>
        <name>1</name>
        <sequence type="displayed"/>
    </isoform>
    <isoform>
        <id>P25101-2</id>
        <name>2</name>
        <name>Delta-3</name>
        <sequence type="described" ref="VSP_011059 VSP_011060"/>
    </isoform>
    <isoform>
        <id>P25101-3</id>
        <name>3</name>
        <name>Delta-4</name>
        <sequence type="described" ref="VSP_011062 VSP_011063"/>
    </isoform>
    <isoform>
        <id>P25101-4</id>
        <name>4</name>
        <name>Delta-3,4</name>
        <sequence type="described" ref="VSP_011061"/>
    </isoform>
    <isoform>
        <id>P25101-5</id>
        <name>5</name>
        <sequence type="described" ref="VSP_045578"/>
    </isoform>
</comment>
<comment type="tissue specificity">
    <text evidence="8 9">Isoform 1, isoform 3 and isoform 4 are expressed in a variety of tissues, with highest levels in the aorta and cerebellum, followed by lung, atrium and cerebral cortex, lower levels in the placenta, kidney, adrenal gland, duodenum, colon, ventricle and liver but no expression in umbilical vein endothelial cells. Within the placenta, isoform 1, isoform 2, isoform 3 and isoform 4 are expressed in the villi and stem villi vessels.</text>
</comment>
<comment type="disease" evidence="7">
    <disease id="DI-04426">
        <name>Mandibulofacial dysostosis with alopecia</name>
        <acronym>MFDA</acronym>
        <description>A form of mandibulofacial dysostosis, a disorder characterized by malar and mandibular hypoplasia, typically associated with abnormalities of the ears and eyelids. MFDA features include maxillary dysmorphism with dysplastic zygomatic arch, hypoplastic mandible, scalp alopecia, scant eyebrows and eyelashes, severe hypoplasia or aplasia of eyelids, small cupped dysplastic ears, conductive hearing loss, cleft palate, dental anomalies, micrognathia, and limited jaw mobility.</description>
        <dbReference type="MIM" id="616367"/>
    </disease>
    <text>The disease is caused by variants affecting the gene represented in this entry.</text>
</comment>
<comment type="similarity">
    <text evidence="3">Belongs to the G-protein coupled receptor 1 family. Endothelin receptor subfamily. EDNRA sub-subfamily.</text>
</comment>
<protein>
    <recommendedName>
        <fullName evidence="13">Endothelin-1 receptor</fullName>
    </recommendedName>
    <alternativeName>
        <fullName evidence="14">Endothelin receptor type A</fullName>
        <shortName>ET-A</shortName>
        <shortName>ETA-R</shortName>
        <shortName>hET-AR</shortName>
    </alternativeName>
</protein>
<name>EDNRA_HUMAN</name>
<gene>
    <name evidence="14" type="primary">EDNRA</name>
    <name type="synonym">ETA</name>
    <name type="synonym">ETRA</name>
</gene>
<sequence length="427" mass="48722">METLCLRASFWLALVGCVISDNPERYSTNLSNHVDDFTTFRGTELSFLVTTHQPTNLVLPSNGSMHNYCPQQTKITSAFKYINTVISCTIFIVGMVGNATLLRIIYQNKCMRNGPNALIASLALGDLIYVVIDLPINVFKLLAGRWPFDHNDFGVFLCKLFPFLQKSSVGITVLNLCALSVDRYRAVASWSRVQGIGIPLVTAIEIVSIWILSFILAIPEAIGFVMVPFEYRGEQHKTCMLNATSKFMEFYQDVKDWWLFGFYFCMPLVCTAIFYTLMTCEMLNRRNGSLRIALSEHLKQRREVAKTVFCLVVIFALCWFPLHLSRILKKTVYNEMDKNRCELLSFLLLMDYIGINLATMNSCINPIALYFVSKKFKNCFQSCLCCCCYQSKSLMTSVPMNGTSIQWKNHDQNNHNTDRSSHKDSMN</sequence>